<dbReference type="EMBL" id="U04970">
    <property type="protein sequence ID" value="AAA16023.1"/>
    <property type="molecule type" value="mRNA"/>
</dbReference>
<dbReference type="EMBL" id="U04971">
    <property type="protein sequence ID" value="AAA16024.1"/>
    <property type="molecule type" value="mRNA"/>
</dbReference>
<dbReference type="EMBL" id="U04972">
    <property type="protein sequence ID" value="AAA16025.1"/>
    <property type="molecule type" value="mRNA"/>
</dbReference>
<dbReference type="EMBL" id="U04973">
    <property type="protein sequence ID" value="AAA16026.1"/>
    <property type="molecule type" value="mRNA"/>
</dbReference>
<dbReference type="EMBL" id="U04974">
    <property type="protein sequence ID" value="AAA16027.1"/>
    <property type="molecule type" value="mRNA"/>
</dbReference>
<dbReference type="EMBL" id="U04975">
    <property type="protein sequence ID" value="AAA16028.1"/>
    <property type="molecule type" value="mRNA"/>
</dbReference>
<dbReference type="EMBL" id="U04976">
    <property type="protein sequence ID" value="AAA16029.1"/>
    <property type="molecule type" value="mRNA"/>
</dbReference>
<dbReference type="EMBL" id="U04977">
    <property type="protein sequence ID" value="AAA16030.1"/>
    <property type="molecule type" value="mRNA"/>
</dbReference>
<dbReference type="EMBL" id="U04978">
    <property type="protein sequence ID" value="AAA16031.1"/>
    <property type="molecule type" value="mRNA"/>
</dbReference>
<dbReference type="RefSeq" id="NP_001316016.1">
    <molecule id="P02641-4"/>
    <property type="nucleotide sequence ID" value="NM_001329087.1"/>
</dbReference>
<dbReference type="RefSeq" id="XP_069903503.1">
    <molecule id="P02641-2"/>
    <property type="nucleotide sequence ID" value="XM_070047402.1"/>
</dbReference>
<dbReference type="RefSeq" id="XP_069903670.1">
    <molecule id="P02641-4"/>
    <property type="nucleotide sequence ID" value="XM_070047569.1"/>
</dbReference>
<dbReference type="RefSeq" id="XP_069903846.1">
    <molecule id="P02641-8"/>
    <property type="nucleotide sequence ID" value="XM_070047745.1"/>
</dbReference>
<dbReference type="BMRB" id="P02641"/>
<dbReference type="SMR" id="P02641"/>
<dbReference type="CORUM" id="P02641"/>
<dbReference type="FunCoup" id="P02641">
    <property type="interactions" value="13"/>
</dbReference>
<dbReference type="STRING" id="9986.ENSOCUP00000001509"/>
<dbReference type="iPTMnet" id="P02641"/>
<dbReference type="PaxDb" id="9986-ENSOCUP00000001509"/>
<dbReference type="eggNOG" id="KOG3634">
    <property type="taxonomic scope" value="Eukaryota"/>
</dbReference>
<dbReference type="InParanoid" id="P02641"/>
<dbReference type="Proteomes" id="UP000001811">
    <property type="component" value="Unplaced"/>
</dbReference>
<dbReference type="GO" id="GO:0005861">
    <property type="term" value="C:troponin complex"/>
    <property type="evidence" value="ECO:0007669"/>
    <property type="project" value="InterPro"/>
</dbReference>
<dbReference type="GO" id="GO:0005523">
    <property type="term" value="F:tropomyosin binding"/>
    <property type="evidence" value="ECO:0007669"/>
    <property type="project" value="TreeGrafter"/>
</dbReference>
<dbReference type="GO" id="GO:0030172">
    <property type="term" value="F:troponin C binding"/>
    <property type="evidence" value="ECO:0007669"/>
    <property type="project" value="TreeGrafter"/>
</dbReference>
<dbReference type="GO" id="GO:0031013">
    <property type="term" value="F:troponin I binding"/>
    <property type="evidence" value="ECO:0007669"/>
    <property type="project" value="TreeGrafter"/>
</dbReference>
<dbReference type="GO" id="GO:0006937">
    <property type="term" value="P:regulation of muscle contraction"/>
    <property type="evidence" value="ECO:0007669"/>
    <property type="project" value="InterPro"/>
</dbReference>
<dbReference type="GO" id="GO:0045214">
    <property type="term" value="P:sarcomere organization"/>
    <property type="evidence" value="ECO:0007669"/>
    <property type="project" value="TreeGrafter"/>
</dbReference>
<dbReference type="GO" id="GO:0003009">
    <property type="term" value="P:skeletal muscle contraction"/>
    <property type="evidence" value="ECO:0007669"/>
    <property type="project" value="TreeGrafter"/>
</dbReference>
<dbReference type="FunFam" id="1.20.5.350:FF:000001">
    <property type="entry name" value="Troponin T, fast skeletal muscle"/>
    <property type="match status" value="1"/>
</dbReference>
<dbReference type="Gene3D" id="1.20.5.350">
    <property type="match status" value="1"/>
</dbReference>
<dbReference type="InterPro" id="IPR027707">
    <property type="entry name" value="TNNT"/>
</dbReference>
<dbReference type="InterPro" id="IPR001978">
    <property type="entry name" value="Troponin"/>
</dbReference>
<dbReference type="InterPro" id="IPR038077">
    <property type="entry name" value="Troponin_sf"/>
</dbReference>
<dbReference type="PANTHER" id="PTHR11521">
    <property type="entry name" value="TROPONIN T"/>
    <property type="match status" value="1"/>
</dbReference>
<dbReference type="PANTHER" id="PTHR11521:SF4">
    <property type="entry name" value="TROPONIN T, FAST SKELETAL MUSCLE"/>
    <property type="match status" value="1"/>
</dbReference>
<dbReference type="Pfam" id="PF00992">
    <property type="entry name" value="Troponin"/>
    <property type="match status" value="1"/>
</dbReference>
<dbReference type="SUPFAM" id="SSF90250">
    <property type="entry name" value="Troponin coil-coiled subunits"/>
    <property type="match status" value="1"/>
</dbReference>
<sequence length="279" mass="33034">MSDEEVEHVEEQYEEEEEAQEEAPSPAEVHEPAPEVHVPEEVHEDALEDMREEEEEEEKPRPKLTAPKIPEGEKVDFDDIQKKRQNKDLMELQALIDSHFEARKKEEEELVALKERIEKRRAERAEQQRIRAEKERERQNRLAEEKARREEEDAKRRAEEDLKKKKALSSMGANYSSYLAKADQKRGKKQTAREMKKKILAERRKPLNIDHLSDEKLRDKAKELWDTLYQLETDKFEFGEKLKRQKYDIMNVRARVEMLAKFSKKAGTTAKGKVGGRWK</sequence>
<organism>
    <name type="scientific">Oryctolagus cuniculus</name>
    <name type="common">Rabbit</name>
    <dbReference type="NCBI Taxonomy" id="9986"/>
    <lineage>
        <taxon>Eukaryota</taxon>
        <taxon>Metazoa</taxon>
        <taxon>Chordata</taxon>
        <taxon>Craniata</taxon>
        <taxon>Vertebrata</taxon>
        <taxon>Euteleostomi</taxon>
        <taxon>Mammalia</taxon>
        <taxon>Eutheria</taxon>
        <taxon>Euarchontoglires</taxon>
        <taxon>Glires</taxon>
        <taxon>Lagomorpha</taxon>
        <taxon>Leporidae</taxon>
        <taxon>Oryctolagus</taxon>
    </lineage>
</organism>
<accession>P02641</accession>
<accession>P19349</accession>
<accession>P19350</accession>
<proteinExistence type="evidence at protein level"/>
<reference key="1">
    <citation type="journal article" date="1977" name="J. Biol. Chem.">
        <title>Primary structure of rabbit skeletal muscle troponin-T. Sequence determination of the NH2-terminal fragment CB3 and the complete sequence of troponin-T.</title>
        <authorList>
            <person name="Pearlstone J.R."/>
            <person name="Johnson P."/>
            <person name="Carpenter M.R."/>
            <person name="Smillie L.B."/>
        </authorList>
    </citation>
    <scope>PROTEIN SEQUENCE OF 2-11; 18-44 AND 57-279</scope>
</reference>
<reference key="2">
    <citation type="journal article" date="1993" name="Dev. Biol.">
        <title>Origin of fetal troponin T: developmentally regulated splicing of a new exon in the fast troponin T gene.</title>
        <authorList>
            <person name="Briggs M.M."/>
            <person name="Schachat F."/>
        </authorList>
    </citation>
    <scope>NUCLEOTIDE SEQUENCE [MRNA] OF 1-67</scope>
    <scope>ALTERNATIVE SPLICING</scope>
    <source>
        <strain>New Zealand white</strain>
        <tissue>Skeletal muscle</tissue>
    </source>
</reference>
<reference key="3">
    <citation type="journal article" date="1990" name="Dev. Biol.">
        <title>Transitions from fetal to fast troponin T isoforms are coordinated with changes in tropomyosin and alpha-actinin isoforms in developing rabbit skeletal muscle.</title>
        <authorList>
            <person name="Briggs M.M."/>
            <person name="McGinnis H.D."/>
            <person name="Schachat F."/>
        </authorList>
    </citation>
    <scope>NUCLEOTIDE SEQUENCE [MRNA] OF 1-67</scope>
    <scope>ALTERNATIVE SPLICING</scope>
    <source>
        <strain>New Zealand white</strain>
        <tissue>Skeletal muscle</tissue>
    </source>
</reference>
<reference key="4">
    <citation type="submission" date="1994-01" db="EMBL/GenBank/DDBJ databases">
        <authorList>
            <person name="Briggs M.M."/>
            <person name="Schachat F."/>
        </authorList>
    </citation>
    <scope>NUCLEOTIDE SEQUENCE [MRNA] OF 1-67</scope>
    <scope>ALTERNATIVE SPLICING</scope>
    <source>
        <strain>New Zealand white</strain>
        <tissue>Skeletal muscle</tissue>
    </source>
</reference>
<reference key="5">
    <citation type="journal article" date="1989" name="J. Mol. Biol.">
        <title>N-terminal amino acid sequences of three functionally different troponin T isoforms from rabbit fast skeletal muscle.</title>
        <authorList>
            <person name="Briggs M.M."/>
            <person name="Schachat F."/>
        </authorList>
    </citation>
    <scope>PROTEIN SEQUENCE OF 2-44 AND 57-66</scope>
    <scope>ACETYLATION AT SER-2</scope>
    <scope>CLEAVAGE OF INITIATOR METHIONINE</scope>
    <source>
        <strain>New Zealand white</strain>
        <tissue>Skeletal muscle</tissue>
    </source>
</reference>
<feature type="initiator methionine" description="Removed" evidence="4 5">
    <location>
        <position position="1"/>
    </location>
</feature>
<feature type="chain" id="PRO_0000186180" description="Troponin T, fast skeletal muscle">
    <location>
        <begin position="2"/>
        <end position="279"/>
    </location>
</feature>
<feature type="region of interest" description="Disordered" evidence="3">
    <location>
        <begin position="1"/>
        <end position="82"/>
    </location>
</feature>
<feature type="region of interest" description="Disordered" evidence="3">
    <location>
        <begin position="121"/>
        <end position="200"/>
    </location>
</feature>
<feature type="compositionally biased region" description="Acidic residues" evidence="3">
    <location>
        <begin position="1"/>
        <end position="21"/>
    </location>
</feature>
<feature type="compositionally biased region" description="Basic and acidic residues" evidence="3">
    <location>
        <begin position="28"/>
        <end position="49"/>
    </location>
</feature>
<feature type="compositionally biased region" description="Basic and acidic residues" evidence="3">
    <location>
        <begin position="70"/>
        <end position="82"/>
    </location>
</feature>
<feature type="compositionally biased region" description="Basic and acidic residues" evidence="3">
    <location>
        <begin position="121"/>
        <end position="163"/>
    </location>
</feature>
<feature type="compositionally biased region" description="Basic and acidic residues" evidence="3">
    <location>
        <begin position="191"/>
        <end position="200"/>
    </location>
</feature>
<feature type="modified residue" description="N-acetylserine" evidence="4">
    <location>
        <position position="2"/>
    </location>
</feature>
<feature type="modified residue" description="Phosphoserine" evidence="1">
    <location>
        <position position="2"/>
    </location>
</feature>
<feature type="modified residue" description="Phosphoserine" evidence="1">
    <location>
        <position position="98"/>
    </location>
</feature>
<feature type="modified residue" description="Phosphoserine" evidence="2">
    <location>
        <position position="169"/>
    </location>
</feature>
<feature type="modified residue" description="Phosphoserine" evidence="1">
    <location>
        <position position="176"/>
    </location>
</feature>
<feature type="modified residue" description="Phosphoserine" evidence="1">
    <location>
        <position position="177"/>
    </location>
</feature>
<feature type="modified residue" description="Phosphoserine" evidence="1">
    <location>
        <position position="213"/>
    </location>
</feature>
<feature type="modified residue" description="Phosphotyrosine" evidence="1">
    <location>
        <position position="229"/>
    </location>
</feature>
<feature type="splice variant" id="VSP_006653" description="In isoform TnT2F, isoform TnT2.5F and isoform TnT4F." evidence="6">
    <location>
        <begin position="12"/>
        <end position="17"/>
    </location>
</feature>
<feature type="splice variant" id="VSP_006654" description="In isoform TnT3, isoform TnT3F and isoform TnT4F." evidence="6">
    <location>
        <begin position="23"/>
        <end position="39"/>
    </location>
</feature>
<feature type="splice variant" id="VSP_006655" description="In isoform TnT2, isoform TnT2FA and isoform TnT2.5F." evidence="6">
    <location>
        <begin position="33"/>
        <end position="39"/>
    </location>
</feature>
<feature type="splice variant" id="VSP_006656" description="In isoform TnT1F, isoform TnT2F, isoform TnT2FA, isoform TnT2.5F, isoform TnT3F and isoform TnT4F." evidence="6">
    <location>
        <begin position="45"/>
        <end position="56"/>
    </location>
</feature>
<feature type="sequence conflict" description="In Ref. 1; AA sequence." evidence="6" ref="1">
    <original>Q</original>
    <variation>E</variation>
    <location>
        <position position="20"/>
    </location>
</feature>
<feature type="sequence conflict" description="In Ref. 1; AA sequence and 5; AA sequence." evidence="6" ref="1 5">
    <original>VH</original>
    <variation>HV</variation>
    <location>
        <begin position="36"/>
        <end position="37"/>
    </location>
</feature>
<feature type="sequence conflict" description="In Ref. 1; AA sequence." evidence="6" ref="1">
    <location>
        <position position="62"/>
    </location>
</feature>
<gene>
    <name type="primary">TNNT3</name>
</gene>
<name>TNNT3_RABIT</name>
<protein>
    <recommendedName>
        <fullName>Troponin T, fast skeletal muscle</fullName>
        <shortName>TnTf</shortName>
    </recommendedName>
    <alternativeName>
        <fullName>Fast skeletal muscle troponin T</fullName>
        <shortName>fTnT</shortName>
    </alternativeName>
</protein>
<keyword id="KW-0007">Acetylation</keyword>
<keyword id="KW-0025">Alternative splicing</keyword>
<keyword id="KW-0903">Direct protein sequencing</keyword>
<keyword id="KW-0514">Muscle protein</keyword>
<keyword id="KW-0597">Phosphoprotein</keyword>
<keyword id="KW-1185">Reference proteome</keyword>
<evidence type="ECO:0000250" key="1">
    <source>
        <dbReference type="UniProtKB" id="P09739"/>
    </source>
</evidence>
<evidence type="ECO:0000250" key="2">
    <source>
        <dbReference type="UniProtKB" id="Q9QZ47"/>
    </source>
</evidence>
<evidence type="ECO:0000256" key="3">
    <source>
        <dbReference type="SAM" id="MobiDB-lite"/>
    </source>
</evidence>
<evidence type="ECO:0000269" key="4">
    <source>
    </source>
</evidence>
<evidence type="ECO:0000269" key="5">
    <source>
    </source>
</evidence>
<evidence type="ECO:0000305" key="6"/>
<comment type="function">
    <text>Troponin T is the tropomyosin-binding subunit of troponin, the thin filament regulatory complex which confers calcium-sensitivity to striated muscle actomyosin ATPase activity.</text>
</comment>
<comment type="alternative products">
    <event type="alternative splicing"/>
    <isoform>
        <id>P02641-1</id>
        <name>TnT1</name>
        <sequence type="displayed"/>
    </isoform>
    <isoform>
        <id>P02641-2</id>
        <name>TnT1F</name>
        <sequence type="described" ref="VSP_006656"/>
    </isoform>
    <isoform>
        <id>P02641-3</id>
        <name>TnT2</name>
        <sequence type="described" ref="VSP_006655"/>
    </isoform>
    <isoform>
        <id>P02641-4</id>
        <name>TnT2F</name>
        <sequence type="described" ref="VSP_006653 VSP_006656"/>
    </isoform>
    <isoform>
        <id>P02641-5</id>
        <name>TnT2FA</name>
        <sequence type="described" ref="VSP_006655 VSP_006656"/>
    </isoform>
    <isoform>
        <id>P02641-6</id>
        <name>TnT2.5F</name>
        <sequence type="described" ref="VSP_006653 VSP_006655 VSP_006656"/>
    </isoform>
    <isoform>
        <id>P02641-7</id>
        <name>TnT3</name>
        <sequence type="described" ref="VSP_006654"/>
    </isoform>
    <isoform>
        <id>P02641-8</id>
        <name>TnT3F</name>
        <sequence type="described" ref="VSP_006654 VSP_006656"/>
    </isoform>
    <isoform>
        <id>P02641-9</id>
        <name>TnT4F</name>
        <sequence type="described" ref="VSP_006653 VSP_006654 VSP_006656"/>
    </isoform>
</comment>
<comment type="similarity">
    <text evidence="6">Belongs to the troponin T family.</text>
</comment>